<accession>Q9VJE5</accession>
<accession>O44929</accession>
<accession>Q8INY8</accession>
<accession>Q8MSD0</accession>
<name>CL190_DROME</name>
<organism>
    <name type="scientific">Drosophila melanogaster</name>
    <name type="common">Fruit fly</name>
    <dbReference type="NCBI Taxonomy" id="7227"/>
    <lineage>
        <taxon>Eukaryota</taxon>
        <taxon>Metazoa</taxon>
        <taxon>Ecdysozoa</taxon>
        <taxon>Arthropoda</taxon>
        <taxon>Hexapoda</taxon>
        <taxon>Insecta</taxon>
        <taxon>Pterygota</taxon>
        <taxon>Neoptera</taxon>
        <taxon>Endopterygota</taxon>
        <taxon>Diptera</taxon>
        <taxon>Brachycera</taxon>
        <taxon>Muscomorpha</taxon>
        <taxon>Ephydroidea</taxon>
        <taxon>Drosophilidae</taxon>
        <taxon>Drosophila</taxon>
        <taxon>Sophophora</taxon>
    </lineage>
</organism>
<proteinExistence type="evidence at protein level"/>
<gene>
    <name type="primary">CLIP-190</name>
    <name type="ORF">CG5020</name>
</gene>
<feature type="chain" id="PRO_0000083514" description="Restin homolog">
    <location>
        <begin position="1"/>
        <end position="1690"/>
    </location>
</feature>
<feature type="domain" description="CAP-Gly 1" evidence="2">
    <location>
        <begin position="143"/>
        <end position="185"/>
    </location>
</feature>
<feature type="domain" description="CAP-Gly 2" evidence="2">
    <location>
        <begin position="260"/>
        <end position="302"/>
    </location>
</feature>
<feature type="region of interest" description="Disordered" evidence="3">
    <location>
        <begin position="1"/>
        <end position="105"/>
    </location>
</feature>
<feature type="region of interest" description="Disordered" evidence="3">
    <location>
        <begin position="195"/>
        <end position="227"/>
    </location>
</feature>
<feature type="region of interest" description="Disordered" evidence="3">
    <location>
        <begin position="843"/>
        <end position="905"/>
    </location>
</feature>
<feature type="region of interest" description="Disordered" evidence="3">
    <location>
        <begin position="1031"/>
        <end position="1052"/>
    </location>
</feature>
<feature type="region of interest" description="Disordered" evidence="3">
    <location>
        <begin position="1400"/>
        <end position="1419"/>
    </location>
</feature>
<feature type="region of interest" description="Disordered" evidence="3">
    <location>
        <begin position="1635"/>
        <end position="1665"/>
    </location>
</feature>
<feature type="coiled-coil region" evidence="1">
    <location>
        <begin position="378"/>
        <end position="468"/>
    </location>
</feature>
<feature type="coiled-coil region" evidence="1">
    <location>
        <begin position="484"/>
        <end position="660"/>
    </location>
</feature>
<feature type="coiled-coil region" evidence="1">
    <location>
        <begin position="667"/>
        <end position="916"/>
    </location>
</feature>
<feature type="coiled-coil region" evidence="1">
    <location>
        <begin position="926"/>
        <end position="981"/>
    </location>
</feature>
<feature type="coiled-coil region" evidence="1">
    <location>
        <begin position="1001"/>
        <end position="1121"/>
    </location>
</feature>
<feature type="coiled-coil region" evidence="1">
    <location>
        <begin position="1158"/>
        <end position="1549"/>
    </location>
</feature>
<feature type="coiled-coil region" evidence="1">
    <location>
        <begin position="1565"/>
        <end position="1600"/>
    </location>
</feature>
<feature type="compositionally biased region" description="Polar residues" evidence="3">
    <location>
        <begin position="1"/>
        <end position="11"/>
    </location>
</feature>
<feature type="compositionally biased region" description="Polar residues" evidence="3">
    <location>
        <begin position="39"/>
        <end position="51"/>
    </location>
</feature>
<feature type="compositionally biased region" description="Polar residues" evidence="3">
    <location>
        <begin position="214"/>
        <end position="226"/>
    </location>
</feature>
<feature type="compositionally biased region" description="Polar residues" evidence="3">
    <location>
        <begin position="865"/>
        <end position="885"/>
    </location>
</feature>
<feature type="compositionally biased region" description="Basic and acidic residues" evidence="3">
    <location>
        <begin position="1040"/>
        <end position="1052"/>
    </location>
</feature>
<feature type="compositionally biased region" description="Basic and acidic residues" evidence="3">
    <location>
        <begin position="1410"/>
        <end position="1419"/>
    </location>
</feature>
<feature type="modified residue" description="Phosphoserine" evidence="5">
    <location>
        <position position="64"/>
    </location>
</feature>
<feature type="modified residue" description="Phosphoserine" evidence="5">
    <location>
        <position position="67"/>
    </location>
</feature>
<feature type="modified residue" description="Phosphoserine" evidence="5">
    <location>
        <position position="216"/>
    </location>
</feature>
<feature type="modified residue" description="Phosphoserine" evidence="5">
    <location>
        <position position="309"/>
    </location>
</feature>
<feature type="modified residue" description="Phosphoserine" evidence="5">
    <location>
        <position position="322"/>
    </location>
</feature>
<feature type="modified residue" description="Phosphoserine" evidence="5">
    <location>
        <position position="325"/>
    </location>
</feature>
<feature type="modified residue" description="Phosphothreonine" evidence="5">
    <location>
        <position position="327"/>
    </location>
</feature>
<feature type="modified residue" description="Phosphoserine" evidence="5">
    <location>
        <position position="328"/>
    </location>
</feature>
<feature type="modified residue" description="Phosphothreonine" evidence="5">
    <location>
        <position position="362"/>
    </location>
</feature>
<feature type="modified residue" description="Phosphothreonine" evidence="5">
    <location>
        <position position="1681"/>
    </location>
</feature>
<feature type="modified residue" description="Phosphoserine" evidence="5">
    <location>
        <position position="1682"/>
    </location>
</feature>
<feature type="splice variant" id="VSP_050480" description="In isoform C." evidence="10">
    <original>MSDDTSASGGTSAPFPSPVTADPEPGATASKLPGPIRSNIPTPATSGTGIPQPSKMKAPSSFGSTGSVSKIGRPCCNHTTPKSGPPPREATSMSRESDDNLSSINSAYT</original>
    <variation>MSRESDDNLSSINSAYTDLYQETVRRFTRSSLSPTPDWDRFSPARRSLKSEAGSRASYDYYLEATGRRRSS</variation>
    <location>
        <begin position="1"/>
        <end position="109"/>
    </location>
</feature>
<feature type="splice variant" id="VSP_050479" description="In isoform B." evidence="8 9">
    <location>
        <position position="348"/>
    </location>
</feature>
<feature type="sequence conflict" description="In Ref. 5; AAR82803." evidence="10" ref="5">
    <original>T</original>
    <variation>I</variation>
    <location>
        <position position="109"/>
    </location>
</feature>
<feature type="sequence conflict" description="In Ref. 1; AAB96783." evidence="10" ref="1">
    <original>S</original>
    <variation>N</variation>
    <location>
        <position position="207"/>
    </location>
</feature>
<feature type="sequence conflict" description="In Ref. 1; AAB96783 and 5; AAR82803." evidence="10" ref="1 5">
    <original>D</original>
    <variation>G</variation>
    <location>
        <position position="420"/>
    </location>
</feature>
<feature type="sequence conflict" description="In Ref. 1; AAB96783 and 5; AAR82803." evidence="10" ref="1 5">
    <original>K</original>
    <variation>Q</variation>
    <location>
        <position position="492"/>
    </location>
</feature>
<feature type="sequence conflict" description="In Ref. 1; AAB96783." evidence="10" ref="1">
    <original>E</original>
    <variation>A</variation>
    <location>
        <position position="561"/>
    </location>
</feature>
<feature type="sequence conflict" description="In Ref. 1; AAB96783." evidence="10" ref="1">
    <original>T</original>
    <variation>S</variation>
    <location>
        <position position="614"/>
    </location>
</feature>
<feature type="sequence conflict" description="In Ref. 1; AAB96783 and 5; AAR82803." evidence="10" ref="1 5">
    <original>S</original>
    <variation>I</variation>
    <location>
        <position position="683"/>
    </location>
</feature>
<feature type="sequence conflict" description="In Ref. 1; AAB96783 and 5; AAR82803." evidence="10" ref="1 5">
    <original>N</original>
    <variation>Q</variation>
    <location>
        <position position="692"/>
    </location>
</feature>
<feature type="sequence conflict" description="In Ref. 1; AAB96783 and 5; AAR82803." evidence="10" ref="1 5">
    <original>M</original>
    <variation>K</variation>
    <location>
        <position position="717"/>
    </location>
</feature>
<feature type="sequence conflict" description="In Ref. 5; AAR82803." evidence="10" ref="5">
    <original>E</original>
    <variation>D</variation>
    <location>
        <position position="728"/>
    </location>
</feature>
<feature type="sequence conflict" description="In Ref. 5; AAR82803." evidence="10" ref="5">
    <original>D</original>
    <variation>V</variation>
    <location>
        <position position="745"/>
    </location>
</feature>
<feature type="sequence conflict" description="In Ref. 1; AAB96783 and 5; AAR82803." evidence="10" ref="1 5">
    <original>F</original>
    <variation>L</variation>
    <location>
        <position position="769"/>
    </location>
</feature>
<feature type="sequence conflict" description="In Ref. 1; AAB96783 and 5; AAR82803." evidence="10" ref="1 5">
    <original>Q</original>
    <variation>E</variation>
    <location>
        <position position="787"/>
    </location>
</feature>
<feature type="sequence conflict" description="In Ref. 5; AAR82803." evidence="10" ref="5">
    <original>EKE</original>
    <variation>KKK</variation>
    <location>
        <begin position="805"/>
        <end position="807"/>
    </location>
</feature>
<feature type="sequence conflict" description="In Ref. 1; AAB96783." evidence="10" ref="1">
    <original>Q</original>
    <variation>E</variation>
    <location>
        <position position="881"/>
    </location>
</feature>
<feature type="sequence conflict" description="In Ref. 1; AAB96783." evidence="10" ref="1">
    <original>HLL</original>
    <variation>QLQ</variation>
    <location>
        <begin position="907"/>
        <end position="909"/>
    </location>
</feature>
<feature type="sequence conflict" description="In Ref. 1; AAB96783." evidence="10" ref="1">
    <original>G</original>
    <variation>E</variation>
    <location>
        <position position="920"/>
    </location>
</feature>
<feature type="sequence conflict" description="In Ref. 1; AAB96783." evidence="10" ref="1">
    <original>C</original>
    <variation>Y</variation>
    <location>
        <position position="929"/>
    </location>
</feature>
<protein>
    <recommendedName>
        <fullName>Restin homolog</fullName>
    </recommendedName>
    <alternativeName>
        <fullName>Cytoplasmic linker protein 190</fullName>
    </alternativeName>
    <alternativeName>
        <fullName>Microtubule-binding protein 190</fullName>
    </alternativeName>
    <alternativeName>
        <fullName>d-CLIP-190</fullName>
    </alternativeName>
</protein>
<evidence type="ECO:0000255" key="1"/>
<evidence type="ECO:0000255" key="2">
    <source>
        <dbReference type="PROSITE-ProRule" id="PRU00045"/>
    </source>
</evidence>
<evidence type="ECO:0000256" key="3">
    <source>
        <dbReference type="SAM" id="MobiDB-lite"/>
    </source>
</evidence>
<evidence type="ECO:0000269" key="4">
    <source>
    </source>
</evidence>
<evidence type="ECO:0000269" key="5">
    <source>
    </source>
</evidence>
<evidence type="ECO:0000269" key="6">
    <source>
    </source>
</evidence>
<evidence type="ECO:0000269" key="7">
    <source>
    </source>
</evidence>
<evidence type="ECO:0000303" key="8">
    <source>
    </source>
</evidence>
<evidence type="ECO:0000303" key="9">
    <source ref="5"/>
</evidence>
<evidence type="ECO:0000305" key="10"/>
<keyword id="KW-0009">Actin-binding</keyword>
<keyword id="KW-0025">Alternative splicing</keyword>
<keyword id="KW-0175">Coiled coil</keyword>
<keyword id="KW-0963">Cytoplasm</keyword>
<keyword id="KW-0206">Cytoskeleton</keyword>
<keyword id="KW-0333">Golgi apparatus</keyword>
<keyword id="KW-0493">Microtubule</keyword>
<keyword id="KW-0597">Phosphoprotein</keyword>
<keyword id="KW-1185">Reference proteome</keyword>
<keyword id="KW-0677">Repeat</keyword>
<dbReference type="EMBL" id="AF041382">
    <property type="protein sequence ID" value="AAB96783.1"/>
    <property type="molecule type" value="mRNA"/>
</dbReference>
<dbReference type="EMBL" id="AE014134">
    <property type="protein sequence ID" value="AAF53604.1"/>
    <property type="molecule type" value="Genomic_DNA"/>
</dbReference>
<dbReference type="EMBL" id="AE014134">
    <property type="protein sequence ID" value="AAF53605.2"/>
    <property type="molecule type" value="Genomic_DNA"/>
</dbReference>
<dbReference type="EMBL" id="AE014134">
    <property type="protein sequence ID" value="AAN10987.1"/>
    <property type="molecule type" value="Genomic_DNA"/>
</dbReference>
<dbReference type="EMBL" id="AY118896">
    <property type="protein sequence ID" value="AAM50756.1"/>
    <property type="molecule type" value="mRNA"/>
</dbReference>
<dbReference type="EMBL" id="BT011136">
    <property type="protein sequence ID" value="AAR82803.1"/>
    <property type="molecule type" value="mRNA"/>
</dbReference>
<dbReference type="PIR" id="T13030">
    <property type="entry name" value="T13030"/>
</dbReference>
<dbReference type="RefSeq" id="NP_609835.2">
    <molecule id="Q9VJE5-1"/>
    <property type="nucleotide sequence ID" value="NM_135991.4"/>
</dbReference>
<dbReference type="RefSeq" id="NP_724047.2">
    <molecule id="Q9VJE5-2"/>
    <property type="nucleotide sequence ID" value="NM_165213.5"/>
</dbReference>
<dbReference type="RefSeq" id="NP_724048.1">
    <molecule id="Q9VJE5-3"/>
    <property type="nucleotide sequence ID" value="NM_165214.2"/>
</dbReference>
<dbReference type="SMR" id="Q9VJE5"/>
<dbReference type="BioGRID" id="61038">
    <property type="interactions" value="14"/>
</dbReference>
<dbReference type="DIP" id="DIP-21005N"/>
<dbReference type="FunCoup" id="Q9VJE5">
    <property type="interactions" value="739"/>
</dbReference>
<dbReference type="IntAct" id="Q9VJE5">
    <property type="interactions" value="19"/>
</dbReference>
<dbReference type="STRING" id="7227.FBpp0080529"/>
<dbReference type="GlyGen" id="Q9VJE5">
    <property type="glycosylation" value="1 site"/>
</dbReference>
<dbReference type="iPTMnet" id="Q9VJE5"/>
<dbReference type="PaxDb" id="7227-FBpp0080529"/>
<dbReference type="DNASU" id="35042"/>
<dbReference type="EnsemblMetazoa" id="FBtr0080975">
    <molecule id="Q9VJE5-2"/>
    <property type="protein sequence ID" value="FBpp0080528"/>
    <property type="gene ID" value="FBgn0020503"/>
</dbReference>
<dbReference type="EnsemblMetazoa" id="FBtr0080976">
    <molecule id="Q9VJE5-1"/>
    <property type="protein sequence ID" value="FBpp0080529"/>
    <property type="gene ID" value="FBgn0020503"/>
</dbReference>
<dbReference type="EnsemblMetazoa" id="FBtr0080977">
    <molecule id="Q9VJE5-3"/>
    <property type="protein sequence ID" value="FBpp0080530"/>
    <property type="gene ID" value="FBgn0020503"/>
</dbReference>
<dbReference type="GeneID" id="35042"/>
<dbReference type="KEGG" id="dme:Dmel_CG5020"/>
<dbReference type="AGR" id="FB:FBgn0020503"/>
<dbReference type="CTD" id="35042"/>
<dbReference type="FlyBase" id="FBgn0020503">
    <property type="gene designation" value="CLIP-190"/>
</dbReference>
<dbReference type="VEuPathDB" id="VectorBase:FBgn0020503"/>
<dbReference type="eggNOG" id="KOG4568">
    <property type="taxonomic scope" value="Eukaryota"/>
</dbReference>
<dbReference type="GeneTree" id="ENSGT00940000155122"/>
<dbReference type="InParanoid" id="Q9VJE5"/>
<dbReference type="OrthoDB" id="2130750at2759"/>
<dbReference type="PhylomeDB" id="Q9VJE5"/>
<dbReference type="SignaLink" id="Q9VJE5"/>
<dbReference type="BioGRID-ORCS" id="35042">
    <property type="hits" value="0 hits in 3 CRISPR screens"/>
</dbReference>
<dbReference type="CD-CODE" id="2838EF58">
    <property type="entry name" value="Centrosome"/>
</dbReference>
<dbReference type="ChiTaRS" id="CLIP-190">
    <property type="organism name" value="fly"/>
</dbReference>
<dbReference type="GenomeRNAi" id="35042"/>
<dbReference type="PRO" id="PR:Q9VJE5"/>
<dbReference type="Proteomes" id="UP000000803">
    <property type="component" value="Chromosome 2L"/>
</dbReference>
<dbReference type="Bgee" id="FBgn0020503">
    <property type="expression patterns" value="Expressed in surface associated glial cell (Drosophila) in post-embryonic organism and 289 other cell types or tissues"/>
</dbReference>
<dbReference type="ExpressionAtlas" id="Q9VJE5">
    <property type="expression patterns" value="baseline and differential"/>
</dbReference>
<dbReference type="GO" id="GO:0030424">
    <property type="term" value="C:axon"/>
    <property type="evidence" value="ECO:0000314"/>
    <property type="project" value="FlyBase"/>
</dbReference>
<dbReference type="GO" id="GO:0044295">
    <property type="term" value="C:axonal growth cone"/>
    <property type="evidence" value="ECO:0000314"/>
    <property type="project" value="FlyBase"/>
</dbReference>
<dbReference type="GO" id="GO:0045169">
    <property type="term" value="C:fusome"/>
    <property type="evidence" value="ECO:0000314"/>
    <property type="project" value="FlyBase"/>
</dbReference>
<dbReference type="GO" id="GO:0005794">
    <property type="term" value="C:Golgi apparatus"/>
    <property type="evidence" value="ECO:0000314"/>
    <property type="project" value="UniProtKB"/>
</dbReference>
<dbReference type="GO" id="GO:0000776">
    <property type="term" value="C:kinetochore"/>
    <property type="evidence" value="ECO:0000314"/>
    <property type="project" value="FlyBase"/>
</dbReference>
<dbReference type="GO" id="GO:0005875">
    <property type="term" value="C:microtubule associated complex"/>
    <property type="evidence" value="ECO:0000314"/>
    <property type="project" value="UniProtKB"/>
</dbReference>
<dbReference type="GO" id="GO:0005815">
    <property type="term" value="C:microtubule organizing center"/>
    <property type="evidence" value="ECO:0007669"/>
    <property type="project" value="UniProtKB-SubCell"/>
</dbReference>
<dbReference type="GO" id="GO:0035371">
    <property type="term" value="C:microtubule plus-end"/>
    <property type="evidence" value="ECO:0000314"/>
    <property type="project" value="FlyBase"/>
</dbReference>
<dbReference type="GO" id="GO:0048471">
    <property type="term" value="C:perinuclear region of cytoplasm"/>
    <property type="evidence" value="ECO:0007669"/>
    <property type="project" value="UniProtKB-SubCell"/>
</dbReference>
<dbReference type="GO" id="GO:0005876">
    <property type="term" value="C:spindle microtubule"/>
    <property type="evidence" value="ECO:0000314"/>
    <property type="project" value="FlyBase"/>
</dbReference>
<dbReference type="GO" id="GO:0003779">
    <property type="term" value="F:actin binding"/>
    <property type="evidence" value="ECO:0000314"/>
    <property type="project" value="UniProtKB"/>
</dbReference>
<dbReference type="GO" id="GO:0008017">
    <property type="term" value="F:microtubule binding"/>
    <property type="evidence" value="ECO:0000314"/>
    <property type="project" value="UniProtKB"/>
</dbReference>
<dbReference type="GO" id="GO:0051010">
    <property type="term" value="F:microtubule plus-end binding"/>
    <property type="evidence" value="ECO:0000314"/>
    <property type="project" value="FlyBase"/>
</dbReference>
<dbReference type="GO" id="GO:0070854">
    <property type="term" value="F:myosin VI heavy chain binding"/>
    <property type="evidence" value="ECO:0000353"/>
    <property type="project" value="FlyBase"/>
</dbReference>
<dbReference type="GO" id="GO:0007349">
    <property type="term" value="P:cellularization"/>
    <property type="evidence" value="ECO:0000315"/>
    <property type="project" value="UniProtKB"/>
</dbReference>
<dbReference type="FunFam" id="1.10.287.1490:FF:000024">
    <property type="entry name" value="Cytoplasmic linker protein 190, isoform M"/>
    <property type="match status" value="1"/>
</dbReference>
<dbReference type="Gene3D" id="1.10.287.1490">
    <property type="match status" value="2"/>
</dbReference>
<dbReference type="Gene3D" id="2.30.30.190">
    <property type="entry name" value="CAP Gly-rich-like domain"/>
    <property type="match status" value="2"/>
</dbReference>
<dbReference type="InterPro" id="IPR036859">
    <property type="entry name" value="CAP-Gly_dom_sf"/>
</dbReference>
<dbReference type="InterPro" id="IPR000938">
    <property type="entry name" value="CAP-Gly_domain"/>
</dbReference>
<dbReference type="InterPro" id="IPR032108">
    <property type="entry name" value="CLIP1_ZNF"/>
</dbReference>
<dbReference type="PANTHER" id="PTHR18916">
    <property type="entry name" value="DYNACTIN 1-RELATED MICROTUBULE-BINDING"/>
    <property type="match status" value="1"/>
</dbReference>
<dbReference type="PANTHER" id="PTHR18916:SF93">
    <property type="entry name" value="RESTIN HOMOLOG"/>
    <property type="match status" value="1"/>
</dbReference>
<dbReference type="Pfam" id="PF01302">
    <property type="entry name" value="CAP_GLY"/>
    <property type="match status" value="2"/>
</dbReference>
<dbReference type="Pfam" id="PF16641">
    <property type="entry name" value="CLIP1_ZNF"/>
    <property type="match status" value="2"/>
</dbReference>
<dbReference type="SMART" id="SM01052">
    <property type="entry name" value="CAP_GLY"/>
    <property type="match status" value="2"/>
</dbReference>
<dbReference type="SUPFAM" id="SSF74924">
    <property type="entry name" value="Cap-Gly domain"/>
    <property type="match status" value="2"/>
</dbReference>
<dbReference type="PROSITE" id="PS00845">
    <property type="entry name" value="CAP_GLY_1"/>
    <property type="match status" value="2"/>
</dbReference>
<dbReference type="PROSITE" id="PS50245">
    <property type="entry name" value="CAP_GLY_2"/>
    <property type="match status" value="2"/>
</dbReference>
<sequence>MSDDTSASGGTSAPFPSPVTADPEPGATASKLPGPIRSNIPTPATSGTGIPQPSKMKAPSSFGSTGSVSKIGRPCCNHTTPKSGPPPREATSMSRESDDNLSSINSAYTDNSSAVLTANTEQFIIGQRVWLGGTRPGQIAFIGDTHFAAGEWAGVVLDEPNGKNDGCVSGKRYFQCEPKRGIFSRLTRLTTYPLAGAQTPTSPLAKSSPDRSRTVSPTASIRSSMLRSPGIGGKNGMAVGDRVIVSSGFGSRPGILRYLGETQFAPGNWCGVELDEPSGKNDGTVDDIRYFECKPKYGVFVPIAKVSLSPSSKKTRLSRTGSRESLTSIGTMNSIATTATSRMRMNAQQRKSSTPVKPILATPKSQFSMQDLLREKQQHVEKLMVERDLDREDAQNQALQLQKNINELKARIVELESALDNERKKTEELQCSIDEAQFCGDELNAQSQVYKEKIHDLESKITKLVSATPSLQSILPPDLPSDDGALQEEIAKLQEKMTIQQKEVESRIAEQLEEEQRLRENVKYLNEQIATLQSELVSKDEALEKFSLSECGIENLRRELELLKEENEKQAQEAQAEFTRKLAEKSVEVLRLSSELQNLKATSDSLESERVNKTDECEILQTEVRMRDEQIRELNQQLDEVTTQLNVQKADSSALDDMLRLQKEGTEEKSTLLEKTEKELVQSKEQAAKTLNDKEQLEKQISDLKQLAEQEKLVREMTENAINQIQLEKESIEQQLALKQNELEDFQKKQSESEVHLQEIKAQNTQKDFELVESGESLKKLQQQLEQKTLGHEKLQAALEELKKEKETIIKEKEQELQQLQSKSAESESALKVVQVQLEQLQQQAAASGEEGSKTVAKLHDEISQLKSQAEETQSELKSTQSNLEAKSKQLEAANGSLEEEAKKSGHLLEQITKLKSEVGETQAALSSCHTDVESKTKQLEAANAALEKVNKEYAESRAEASDLQDKVKEITDTLHAELQAERSSSSALHTKLSKFSDEIATGHKELTSKADAWSQEMLQKEKELQELRQQLQDSQDSQTKLKAEGERKEKSFEESIKNLQEEVTKAKTENLELSTGTQTTIKDLQERLEITNAELQHKEKMASEDAQKIADLKTLVEAIQVANANISATNAELSTVLEVLQAEKSETNHIFELFEMEADMNSERLIEKVTGIKEELKETHLQLDERQKKFEELEEKLKQAQQSEQKLQQESQTSKEKLTEIQQSLQELQDSVKQKEELVQNLEEKVRESSSIIEAQNTKLNESNVQLENKTSCLKETQDQLLESQKKEKQLQEEAAKLSGELQQVQEANGDIKDSLVKVEELVKVLEEKLQAATSQLDAQQATNKELQELLVKSQENEGNLQGESLAVTEKLQQLEQANGELKEALCQKENGLKELQGKLDESNTVLESQKKSHNEIQDKLEQAQQKERTLQEETSKLAEQLSQLKQANEELQKSLQQKQLLLEKGNEFDTQLAEYQKVIDEMDDAASVKSALLEQLQNRVAELETALRQANDAQKTAYLETKELRRQLESLELEKSREVLSLKAQMNGASSRSGKGDEVESLDIETSLAKINFLNSIIADMQQKNDALKAKVQTLETLPMDFTKPHAFDALTKRKPAPRLFCDICDEFDQHDTEDCPIQGSEDQDYSTPSSESNNNEKERKLPAPRKYCDSCEVFGHDTSECADDETY</sequence>
<reference key="1">
    <citation type="journal article" date="1998" name="J. Cell Biol.">
        <title>A class VI unconventional myosin is associated with a homologue of a microtubule-binding protein, cytoplasmic linker protein-170, in neurons and at the posterior pole of Drosophila embryos.</title>
        <authorList>
            <person name="Lantz V.A."/>
            <person name="Miller K.G."/>
        </authorList>
    </citation>
    <scope>NUCLEOTIDE SEQUENCE [MRNA] (ISOFORM A)</scope>
    <scope>FUNCTION</scope>
    <scope>SUBCELLULAR LOCATION</scope>
    <scope>TISSUE SPECIFICITY</scope>
    <source>
        <strain>Oregon-R</strain>
        <tissue>Embryo</tissue>
        <tissue>Ovary</tissue>
    </source>
</reference>
<reference key="2">
    <citation type="journal article" date="2000" name="Science">
        <title>The genome sequence of Drosophila melanogaster.</title>
        <authorList>
            <person name="Adams M.D."/>
            <person name="Celniker S.E."/>
            <person name="Holt R.A."/>
            <person name="Evans C.A."/>
            <person name="Gocayne J.D."/>
            <person name="Amanatides P.G."/>
            <person name="Scherer S.E."/>
            <person name="Li P.W."/>
            <person name="Hoskins R.A."/>
            <person name="Galle R.F."/>
            <person name="George R.A."/>
            <person name="Lewis S.E."/>
            <person name="Richards S."/>
            <person name="Ashburner M."/>
            <person name="Henderson S.N."/>
            <person name="Sutton G.G."/>
            <person name="Wortman J.R."/>
            <person name="Yandell M.D."/>
            <person name="Zhang Q."/>
            <person name="Chen L.X."/>
            <person name="Brandon R.C."/>
            <person name="Rogers Y.-H.C."/>
            <person name="Blazej R.G."/>
            <person name="Champe M."/>
            <person name="Pfeiffer B.D."/>
            <person name="Wan K.H."/>
            <person name="Doyle C."/>
            <person name="Baxter E.G."/>
            <person name="Helt G."/>
            <person name="Nelson C.R."/>
            <person name="Miklos G.L.G."/>
            <person name="Abril J.F."/>
            <person name="Agbayani A."/>
            <person name="An H.-J."/>
            <person name="Andrews-Pfannkoch C."/>
            <person name="Baldwin D."/>
            <person name="Ballew R.M."/>
            <person name="Basu A."/>
            <person name="Baxendale J."/>
            <person name="Bayraktaroglu L."/>
            <person name="Beasley E.M."/>
            <person name="Beeson K.Y."/>
            <person name="Benos P.V."/>
            <person name="Berman B.P."/>
            <person name="Bhandari D."/>
            <person name="Bolshakov S."/>
            <person name="Borkova D."/>
            <person name="Botchan M.R."/>
            <person name="Bouck J."/>
            <person name="Brokstein P."/>
            <person name="Brottier P."/>
            <person name="Burtis K.C."/>
            <person name="Busam D.A."/>
            <person name="Butler H."/>
            <person name="Cadieu E."/>
            <person name="Center A."/>
            <person name="Chandra I."/>
            <person name="Cherry J.M."/>
            <person name="Cawley S."/>
            <person name="Dahlke C."/>
            <person name="Davenport L.B."/>
            <person name="Davies P."/>
            <person name="de Pablos B."/>
            <person name="Delcher A."/>
            <person name="Deng Z."/>
            <person name="Mays A.D."/>
            <person name="Dew I."/>
            <person name="Dietz S.M."/>
            <person name="Dodson K."/>
            <person name="Doup L.E."/>
            <person name="Downes M."/>
            <person name="Dugan-Rocha S."/>
            <person name="Dunkov B.C."/>
            <person name="Dunn P."/>
            <person name="Durbin K.J."/>
            <person name="Evangelista C.C."/>
            <person name="Ferraz C."/>
            <person name="Ferriera S."/>
            <person name="Fleischmann W."/>
            <person name="Fosler C."/>
            <person name="Gabrielian A.E."/>
            <person name="Garg N.S."/>
            <person name="Gelbart W.M."/>
            <person name="Glasser K."/>
            <person name="Glodek A."/>
            <person name="Gong F."/>
            <person name="Gorrell J.H."/>
            <person name="Gu Z."/>
            <person name="Guan P."/>
            <person name="Harris M."/>
            <person name="Harris N.L."/>
            <person name="Harvey D.A."/>
            <person name="Heiman T.J."/>
            <person name="Hernandez J.R."/>
            <person name="Houck J."/>
            <person name="Hostin D."/>
            <person name="Houston K.A."/>
            <person name="Howland T.J."/>
            <person name="Wei M.-H."/>
            <person name="Ibegwam C."/>
            <person name="Jalali M."/>
            <person name="Kalush F."/>
            <person name="Karpen G.H."/>
            <person name="Ke Z."/>
            <person name="Kennison J.A."/>
            <person name="Ketchum K.A."/>
            <person name="Kimmel B.E."/>
            <person name="Kodira C.D."/>
            <person name="Kraft C.L."/>
            <person name="Kravitz S."/>
            <person name="Kulp D."/>
            <person name="Lai Z."/>
            <person name="Lasko P."/>
            <person name="Lei Y."/>
            <person name="Levitsky A.A."/>
            <person name="Li J.H."/>
            <person name="Li Z."/>
            <person name="Liang Y."/>
            <person name="Lin X."/>
            <person name="Liu X."/>
            <person name="Mattei B."/>
            <person name="McIntosh T.C."/>
            <person name="McLeod M.P."/>
            <person name="McPherson D."/>
            <person name="Merkulov G."/>
            <person name="Milshina N.V."/>
            <person name="Mobarry C."/>
            <person name="Morris J."/>
            <person name="Moshrefi A."/>
            <person name="Mount S.M."/>
            <person name="Moy M."/>
            <person name="Murphy B."/>
            <person name="Murphy L."/>
            <person name="Muzny D.M."/>
            <person name="Nelson D.L."/>
            <person name="Nelson D.R."/>
            <person name="Nelson K.A."/>
            <person name="Nixon K."/>
            <person name="Nusskern D.R."/>
            <person name="Pacleb J.M."/>
            <person name="Palazzolo M."/>
            <person name="Pittman G.S."/>
            <person name="Pan S."/>
            <person name="Pollard J."/>
            <person name="Puri V."/>
            <person name="Reese M.G."/>
            <person name="Reinert K."/>
            <person name="Remington K."/>
            <person name="Saunders R.D.C."/>
            <person name="Scheeler F."/>
            <person name="Shen H."/>
            <person name="Shue B.C."/>
            <person name="Siden-Kiamos I."/>
            <person name="Simpson M."/>
            <person name="Skupski M.P."/>
            <person name="Smith T.J."/>
            <person name="Spier E."/>
            <person name="Spradling A.C."/>
            <person name="Stapleton M."/>
            <person name="Strong R."/>
            <person name="Sun E."/>
            <person name="Svirskas R."/>
            <person name="Tector C."/>
            <person name="Turner R."/>
            <person name="Venter E."/>
            <person name="Wang A.H."/>
            <person name="Wang X."/>
            <person name="Wang Z.-Y."/>
            <person name="Wassarman D.A."/>
            <person name="Weinstock G.M."/>
            <person name="Weissenbach J."/>
            <person name="Williams S.M."/>
            <person name="Woodage T."/>
            <person name="Worley K.C."/>
            <person name="Wu D."/>
            <person name="Yang S."/>
            <person name="Yao Q.A."/>
            <person name="Ye J."/>
            <person name="Yeh R.-F."/>
            <person name="Zaveri J.S."/>
            <person name="Zhan M."/>
            <person name="Zhang G."/>
            <person name="Zhao Q."/>
            <person name="Zheng L."/>
            <person name="Zheng X.H."/>
            <person name="Zhong F.N."/>
            <person name="Zhong W."/>
            <person name="Zhou X."/>
            <person name="Zhu S.C."/>
            <person name="Zhu X."/>
            <person name="Smith H.O."/>
            <person name="Gibbs R.A."/>
            <person name="Myers E.W."/>
            <person name="Rubin G.M."/>
            <person name="Venter J.C."/>
        </authorList>
    </citation>
    <scope>NUCLEOTIDE SEQUENCE [LARGE SCALE GENOMIC DNA]</scope>
    <source>
        <strain>Berkeley</strain>
    </source>
</reference>
<reference key="3">
    <citation type="journal article" date="2002" name="Genome Biol.">
        <title>Annotation of the Drosophila melanogaster euchromatic genome: a systematic review.</title>
        <authorList>
            <person name="Misra S."/>
            <person name="Crosby M.A."/>
            <person name="Mungall C.J."/>
            <person name="Matthews B.B."/>
            <person name="Campbell K.S."/>
            <person name="Hradecky P."/>
            <person name="Huang Y."/>
            <person name="Kaminker J.S."/>
            <person name="Millburn G.H."/>
            <person name="Prochnik S.E."/>
            <person name="Smith C.D."/>
            <person name="Tupy J.L."/>
            <person name="Whitfield E.J."/>
            <person name="Bayraktaroglu L."/>
            <person name="Berman B.P."/>
            <person name="Bettencourt B.R."/>
            <person name="Celniker S.E."/>
            <person name="de Grey A.D.N.J."/>
            <person name="Drysdale R.A."/>
            <person name="Harris N.L."/>
            <person name="Richter J."/>
            <person name="Russo S."/>
            <person name="Schroeder A.J."/>
            <person name="Shu S.Q."/>
            <person name="Stapleton M."/>
            <person name="Yamada C."/>
            <person name="Ashburner M."/>
            <person name="Gelbart W.M."/>
            <person name="Rubin G.M."/>
            <person name="Lewis S.E."/>
        </authorList>
    </citation>
    <scope>GENOME REANNOTATION</scope>
    <scope>ALTERNATIVE SPLICING</scope>
    <source>
        <strain>Berkeley</strain>
    </source>
</reference>
<reference key="4">
    <citation type="journal article" date="2002" name="Genome Biol.">
        <title>A Drosophila full-length cDNA resource.</title>
        <authorList>
            <person name="Stapleton M."/>
            <person name="Carlson J.W."/>
            <person name="Brokstein P."/>
            <person name="Yu C."/>
            <person name="Champe M."/>
            <person name="George R.A."/>
            <person name="Guarin H."/>
            <person name="Kronmiller B."/>
            <person name="Pacleb J.M."/>
            <person name="Park S."/>
            <person name="Wan K.H."/>
            <person name="Rubin G.M."/>
            <person name="Celniker S.E."/>
        </authorList>
    </citation>
    <scope>NUCLEOTIDE SEQUENCE [LARGE SCALE MRNA] (ISOFORM B)</scope>
    <source>
        <strain>Berkeley</strain>
        <tissue>Embryo</tissue>
    </source>
</reference>
<reference key="5">
    <citation type="submission" date="2003-12" db="EMBL/GenBank/DDBJ databases">
        <authorList>
            <person name="Stapleton M."/>
            <person name="Brokstein P."/>
            <person name="Hong L."/>
            <person name="Agbayani A."/>
            <person name="Carlson J.W."/>
            <person name="Champe M."/>
            <person name="Chavez C."/>
            <person name="Dorsett V."/>
            <person name="Dresnek D."/>
            <person name="Farfan D."/>
            <person name="Frise E."/>
            <person name="George R.A."/>
            <person name="Gonzalez M."/>
            <person name="Guarin H."/>
            <person name="Kronmiller B."/>
            <person name="Li P.W."/>
            <person name="Liao G."/>
            <person name="Miranda A."/>
            <person name="Mungall C.J."/>
            <person name="Nunoo J."/>
            <person name="Pacleb J.M."/>
            <person name="Paragas V."/>
            <person name="Park S."/>
            <person name="Patel S."/>
            <person name="Phouanenavong S."/>
            <person name="Wan K.H."/>
            <person name="Yu C."/>
            <person name="Lewis S.E."/>
            <person name="Rubin G.M."/>
            <person name="Celniker S.E."/>
        </authorList>
    </citation>
    <scope>NUCLEOTIDE SEQUENCE [MRNA] OF 1-807 (ISOFORM B)</scope>
    <source>
        <strain>Berkeley</strain>
        <tissue>Ovary</tissue>
    </source>
</reference>
<reference key="6">
    <citation type="journal article" date="2000" name="J. Cell Biol.">
        <title>Lava lamp, a novel peripheral Golgi protein, is required for Drosophila melanogaster cellularization.</title>
        <authorList>
            <person name="Sisson J.C."/>
            <person name="Field C."/>
            <person name="Ventura R."/>
            <person name="Royou A."/>
            <person name="Sullivan W."/>
        </authorList>
    </citation>
    <scope>FUNCTION</scope>
    <scope>SUBUNIT</scope>
    <scope>SUBCELLULAR LOCATION</scope>
    <scope>TISSUE SPECIFICITY</scope>
</reference>
<reference key="7">
    <citation type="journal article" date="2008" name="J. Proteome Res.">
        <title>Phosphoproteome analysis of Drosophila melanogaster embryos.</title>
        <authorList>
            <person name="Zhai B."/>
            <person name="Villen J."/>
            <person name="Beausoleil S.A."/>
            <person name="Mintseris J."/>
            <person name="Gygi S.P."/>
        </authorList>
    </citation>
    <scope>PHOSPHORYLATION [LARGE SCALE ANALYSIS] AT SER-64; SER-67; SER-216; SER-309; SER-322; SER-325; THR-327; SER-328; THR-362; THR-1681 AND SER-1682</scope>
    <scope>IDENTIFICATION BY MASS SPECTROMETRY</scope>
    <source>
        <tissue>Embryo</tissue>
    </source>
</reference>
<reference key="8">
    <citation type="journal article" date="2020" name="Nat. Cell Biol.">
        <title>A perinuclear microtubule-organizing centre controls nuclear positioning and basement membrane secretion.</title>
        <authorList>
            <person name="Zheng Y."/>
            <person name="Buchwalter R.A."/>
            <person name="Zheng C."/>
            <person name="Wight E.M."/>
            <person name="Chen J.V."/>
            <person name="Megraw T.L."/>
        </authorList>
    </citation>
    <scope>SUBCELLULAR LOCATION</scope>
    <scope>DISRUPTION PHENOTYPE</scope>
</reference>
<comment type="function">
    <text evidence="4 7">Together CLIP-190 and jar may coordinate the interaction between the actin and microtubule cytoskeleton. May link endocytic vesicles to microtubules. May play a role in formation of furrows during cellularization.</text>
</comment>
<comment type="subunit">
    <text evidence="4">Interacts with Lva.</text>
</comment>
<comment type="subcellular location">
    <subcellularLocation>
        <location evidence="10">Cytoplasm</location>
    </subcellularLocation>
    <subcellularLocation>
        <location evidence="7">Cytoplasm</location>
        <location evidence="7">Cytoskeleton</location>
    </subcellularLocation>
    <subcellularLocation>
        <location evidence="4">Golgi apparatus</location>
    </subcellularLocation>
    <subcellularLocation>
        <location evidence="6">Cytoplasm</location>
        <location evidence="6">Cytoskeleton</location>
        <location evidence="6">Microtubule organizing center</location>
    </subcellularLocation>
    <subcellularLocation>
        <location evidence="6">Cytoplasm</location>
        <location evidence="6">Perinuclear region</location>
    </subcellularLocation>
    <text evidence="4 6 7">Microtubule-associated (PubMed:9472041). Lva-CLIP-190 complexes are found at the Golgi (PubMed:11076973). In the fat body, localizes to a perinuclear non-centrosomal microtubule-organizing centers (ncMTOCs) (PubMed:32066907).</text>
</comment>
<comment type="alternative products">
    <event type="alternative splicing"/>
    <isoform>
        <id>Q9VJE5-1</id>
        <name>A</name>
        <sequence type="displayed"/>
    </isoform>
    <isoform>
        <id>Q9VJE5-2</id>
        <name>B</name>
        <sequence type="described" ref="VSP_050479"/>
    </isoform>
    <isoform>
        <id>Q9VJE5-3</id>
        <name>C</name>
        <sequence type="described" ref="VSP_050480"/>
    </isoform>
</comment>
<comment type="tissue specificity">
    <text evidence="4 7">Specifically expressed at the tip of the furrow in cellularizing blastoderms. CLIP-190 and jar are coexpressed at several times in development and in a number of tissues, including embryonic axonal neuron processes and posterior pole.</text>
</comment>
<comment type="disruption phenotype">
    <text evidence="6">RNAi-mediated knockdown has no effect on nuclear positioning in fat body cells.</text>
</comment>